<comment type="function">
    <text evidence="1 3 6 7 11 13">Guanine nucleotide-binding proteins (G proteins) function as transducers downstream of G protein-coupled receptors (GPCRs) in numerous signaling cascades (PubMed:20966218, PubMed:9687499). The alpha chain contains the guanine nucleotide binding site and alternates between an active, GTP-bound state and an inactive, GDP-bound state (PubMed:20966218). Signaling by an activated GPCR promotes GDP release and GTP binding (PubMed:20966218). The alpha subunit has a low GTPase activity that converts bound GTP to GDP, thereby terminating the signal (PubMed:20966218). Both GDP release and GTP hydrolysis are modulated by numerous regulatory proteins (PubMed:20966218). Signaling is mediated via phospholipase C-beta-dependent inositol lipid hydrolysis for signal propagation: activates phospholipase C-beta: following GPCR activation, GNAQ activates PLC-beta (PLCB1, PLCB2, PLCB3 or PLCB4), leading to production of diacylglycerol (DAG) and inositol 1,4,5-trisphosphate (IP3) (PubMed:20966218). Required for platelet activation (PubMed:9296496). Regulates B-cell selection and survival and is required to prevent B-cell-dependent autoimmunity (PubMed:20624888). Regulates chemotaxis of BM-derived neutrophils and dendritic cells (in vitro) (PubMed:17938235). Transduces FFAR4 signaling in response to long-chain fatty acids (LCFAs) (By similarity). Together with GNA11, required for heart development (PubMed:9687499).</text>
</comment>
<comment type="catalytic activity">
    <reaction evidence="7">
        <text>GTP + H2O = GDP + phosphate + H(+)</text>
        <dbReference type="Rhea" id="RHEA:19669"/>
        <dbReference type="ChEBI" id="CHEBI:15377"/>
        <dbReference type="ChEBI" id="CHEBI:15378"/>
        <dbReference type="ChEBI" id="CHEBI:37565"/>
        <dbReference type="ChEBI" id="CHEBI:43474"/>
        <dbReference type="ChEBI" id="CHEBI:58189"/>
    </reaction>
    <physiologicalReaction direction="left-to-right" evidence="7">
        <dbReference type="Rhea" id="RHEA:19670"/>
    </physiologicalReaction>
</comment>
<comment type="subunit">
    <text evidence="1 9">G proteins are composed of 3 units; alpha, beta and gamma (By similarity). The alpha chain contains the guanine nucleotide binding site (By similarity). Interacts (GDP-bound form) with RIC8A (via C-terminus); promoting GNAQ folding and association with the plasma membrane (By similarity). Binds NHERF1 (By similarity). Forms a complex with PECAM1 and BDKRB2 (By similarity). Interacts with GAS2L2 (PubMed:23994616).</text>
</comment>
<comment type="interaction">
    <interactant intactId="EBI-771975">
        <id>P21279</id>
    </interactant>
    <interactant intactId="EBI-6935014">
        <id>O08915</id>
        <label>Aip</label>
    </interactant>
    <organismsDiffer>false</organismsDiffer>
    <experiments>2</experiments>
</comment>
<comment type="interaction">
    <interactant intactId="EBI-771975">
        <id>P21279</id>
    </interactant>
    <interactant intactId="EBI-4289548">
        <id>Q01970</id>
        <label>PLCB3</label>
    </interactant>
    <organismsDiffer>true</organismsDiffer>
    <experiments>6</experiments>
</comment>
<comment type="interaction">
    <interactant intactId="EBI-771975">
        <id>P21279</id>
    </interactant>
    <interactant intactId="EBI-16037474">
        <id>P41220-1</id>
        <label>RGS2</label>
    </interactant>
    <organismsDiffer>true</organismsDiffer>
    <experiments>3</experiments>
</comment>
<comment type="subcellular location">
    <subcellularLocation>
        <location evidence="5">Cell membrane</location>
        <topology evidence="5">Lipid-anchor</topology>
    </subcellularLocation>
    <subcellularLocation>
        <location evidence="1">Golgi apparatus</location>
    </subcellularLocation>
    <subcellularLocation>
        <location evidence="4">Nucleus</location>
    </subcellularLocation>
    <subcellularLocation>
        <location evidence="4">Nucleus membrane</location>
    </subcellularLocation>
    <text evidence="4">Colocalizes with the adrenergic receptors, ADREN1A and ADREN1B, at the nuclear membrane of cardiac myocytes.</text>
</comment>
<comment type="PTM">
    <text evidence="5">Palmitoylated by ZDHHC3 and ZDHHC7 (PubMed:19001095). Palmitoylation occurs in the Golgi and participates in the localization of GNAQ to the plasma membrane (PubMed:19001095).</text>
</comment>
<comment type="PTM">
    <text evidence="8">Histaminylated at Gln-209 residues by TGM2.</text>
</comment>
<comment type="disruption phenotype">
    <text evidence="11 12 13">Mice are viable but suffer from cerebellar ataxia and display deficiencies in primary hemostasis due to a defect in platelet activation (PubMed:9296496, PubMed:9391157). Mice lacking Gnaq and Gna11 are embryonic lethal due to cardiomyocyte hypoplasia (PubMed:9687499). Mice lacking Gnaq and with one single intact copy of Gna11, as well as mice lacking Gna11 and with one single intact copy of Gnaq die shortly after birth; lethality is caused by heart malformations (PubMed:9687499). Newborns display craniofacial defects (PubMed:9687499).</text>
</comment>
<comment type="similarity">
    <text evidence="14">Belongs to the G-alpha family. G(q) subfamily.</text>
</comment>
<keyword id="KW-0002">3D-structure</keyword>
<keyword id="KW-1003">Cell membrane</keyword>
<keyword id="KW-0903">Direct protein sequencing</keyword>
<keyword id="KW-0333">Golgi apparatus</keyword>
<keyword id="KW-0342">GTP-binding</keyword>
<keyword id="KW-0378">Hydrolase</keyword>
<keyword id="KW-0449">Lipoprotein</keyword>
<keyword id="KW-0460">Magnesium</keyword>
<keyword id="KW-0472">Membrane</keyword>
<keyword id="KW-0479">Metal-binding</keyword>
<keyword id="KW-0547">Nucleotide-binding</keyword>
<keyword id="KW-0539">Nucleus</keyword>
<keyword id="KW-0564">Palmitate</keyword>
<keyword id="KW-1185">Reference proteome</keyword>
<keyword id="KW-0807">Transducer</keyword>
<reference key="1">
    <citation type="journal article" date="1990" name="Proc. Natl. Acad. Sci. U.S.A.">
        <title>G protein diversity: a distinct class of alpha subunits is present in vertebrates and invertebrates.</title>
        <authorList>
            <person name="Strathmann M."/>
            <person name="Simon M.I."/>
        </authorList>
    </citation>
    <scope>NUCLEOTIDE SEQUENCE [MRNA]</scope>
    <source>
        <tissue>Brain</tissue>
    </source>
</reference>
<reference key="2">
    <citation type="journal article" date="2004" name="Genome Res.">
        <title>The status, quality, and expansion of the NIH full-length cDNA project: the Mammalian Gene Collection (MGC).</title>
        <authorList>
            <consortium name="The MGC Project Team"/>
        </authorList>
    </citation>
    <scope>NUCLEOTIDE SEQUENCE [LARGE SCALE MRNA]</scope>
    <source>
        <strain>C57BL/6J</strain>
        <tissue>Brain</tissue>
    </source>
</reference>
<reference key="3">
    <citation type="submission" date="2007-04" db="UniProtKB">
        <authorList>
            <person name="Lubec G."/>
            <person name="Kang S.U."/>
        </authorList>
    </citation>
    <scope>PROTEIN SEQUENCE OF 20-27; 61-73; 78-92; 121-133; 159-181; 184-210; 283-300; 312-338 AND 346-354</scope>
    <scope>IDENTIFICATION BY MASS SPECTROMETRY</scope>
    <source>
        <strain>C57BL/6J</strain>
        <tissue>Brain</tissue>
    </source>
</reference>
<reference key="4">
    <citation type="journal article" date="1997" name="Nature">
        <title>Defective platelet activation in G alpha(q)-deficient mice.</title>
        <authorList>
            <person name="Offermanns S."/>
            <person name="Toombs C.F."/>
            <person name="Hu Y.H."/>
            <person name="Simon M.I."/>
        </authorList>
    </citation>
    <scope>FUNCTION</scope>
    <scope>DISRUPTION PHENOTYPE</scope>
</reference>
<reference key="5">
    <citation type="journal article" date="1997" name="Proc. Natl. Acad. Sci. U.S.A.">
        <title>Impaired motor coordination and persistent multiple climbing fiber innervation of cerebellar Purkinje cells in mice lacking Galphaq.</title>
        <authorList>
            <person name="Offermanns S."/>
            <person name="Hashimoto K."/>
            <person name="Watanabe M."/>
            <person name="Sun W."/>
            <person name="Kurihara H."/>
            <person name="Thompson R.F."/>
            <person name="Inoue Y."/>
            <person name="Kano M."/>
            <person name="Simon M.I."/>
        </authorList>
    </citation>
    <scope>DISRUPTION PHENOTYPE</scope>
</reference>
<reference key="6">
    <citation type="journal article" date="1998" name="EMBO J.">
        <title>Embryonic cardiomyocyte hypoplasia and craniofacial defects in G alpha q/G alpha 11-mutant mice.</title>
        <authorList>
            <person name="Offermanns S."/>
            <person name="Zhao L.P."/>
            <person name="Gohla A."/>
            <person name="Sarosi I."/>
            <person name="Simon M.I."/>
            <person name="Wilkie T.M."/>
        </authorList>
    </citation>
    <scope>FUNCTION</scope>
    <scope>DISRUPTION PHENOTYPE</scope>
</reference>
<reference key="7">
    <citation type="journal article" date="1993" name="J. Biol. Chem.">
        <title>Palmitoylation is required for signaling functions and membrane attachment of Gq alpha and Gs alpha.</title>
        <authorList>
            <person name="Wedegaertner P.B."/>
            <person name="Chu D.H."/>
            <person name="Wilson P.T."/>
            <person name="Levis M.J."/>
            <person name="Bourne H.R."/>
        </authorList>
    </citation>
    <scope>PALMITOYLATION AT CYS-9 AND CYS-10</scope>
    <scope>MUTAGENESIS OF CYS-9 AND CYS-10</scope>
    <source>
        <tissue>Brain</tissue>
    </source>
</reference>
<reference key="8">
    <citation type="journal article" date="2007" name="J. Exp. Med.">
        <title>Identification of an alternative G{alpha}q-dependent chemokine receptor signal transduction pathway in dendritic cells and granulocytes.</title>
        <authorList>
            <person name="Shi G."/>
            <person name="Partida-Sanchez S."/>
            <person name="Misra R.S."/>
            <person name="Tighe M."/>
            <person name="Borchers M.T."/>
            <person name="Lee J.J."/>
            <person name="Simon M.I."/>
            <person name="Lund F.E."/>
        </authorList>
    </citation>
    <scope>FUNCTION</scope>
</reference>
<reference key="9">
    <citation type="journal article" date="2008" name="Circ. Res.">
        <title>Nuclear alpha1-adrenergic receptors signal activated ERK localization to caveolae in adult cardiac myocytes.</title>
        <authorList>
            <person name="Wright C.D."/>
            <person name="Chen Q."/>
            <person name="Baye N.L."/>
            <person name="Huang Y."/>
            <person name="Healy C.L."/>
            <person name="Kasinathan S."/>
            <person name="O'Connell T.D."/>
        </authorList>
    </citation>
    <scope>SUBCELLULAR LOCATION</scope>
</reference>
<reference key="10">
    <citation type="journal article" date="2009" name="Mol. Cell. Biol.">
        <title>Identification of G protein alpha subunit-palmitoylating enzyme.</title>
        <authorList>
            <person name="Tsutsumi R."/>
            <person name="Fukata Y."/>
            <person name="Noritake J."/>
            <person name="Iwanaga T."/>
            <person name="Perez F."/>
            <person name="Fukata M."/>
        </authorList>
    </citation>
    <scope>PALMITOYLATION</scope>
    <scope>SUBCELLULAR LOCATION</scope>
    <scope>TOPOLOGY</scope>
</reference>
<reference key="11">
    <citation type="journal article" date="2010" name="Cell">
        <title>A tissue-specific atlas of mouse protein phosphorylation and expression.</title>
        <authorList>
            <person name="Huttlin E.L."/>
            <person name="Jedrychowski M.P."/>
            <person name="Elias J.E."/>
            <person name="Goswami T."/>
            <person name="Rad R."/>
            <person name="Beausoleil S.A."/>
            <person name="Villen J."/>
            <person name="Haas W."/>
            <person name="Sowa M.E."/>
            <person name="Gygi S.P."/>
        </authorList>
    </citation>
    <scope>IDENTIFICATION BY MASS SPECTROMETRY [LARGE SCALE ANALYSIS]</scope>
    <source>
        <tissue>Brain</tissue>
        <tissue>Brown adipose tissue</tissue>
        <tissue>Heart</tissue>
        <tissue>Kidney</tissue>
        <tissue>Liver</tissue>
        <tissue>Lung</tissue>
        <tissue>Pancreas</tissue>
        <tissue>Spleen</tissue>
        <tissue>Testis</tissue>
    </source>
</reference>
<reference key="12">
    <citation type="journal article" date="2010" name="J. Exp. Med.">
        <title>G alpha q-containing G proteins regulate B cell selection and survival and are required to prevent B cell-dependent autoimmunity.</title>
        <authorList>
            <person name="Misra R.S."/>
            <person name="Shi G."/>
            <person name="Moreno-Garcia M.E."/>
            <person name="Thankappan A."/>
            <person name="Tighe M."/>
            <person name="Mousseau B."/>
            <person name="Kusser K."/>
            <person name="Becker-Herman S."/>
            <person name="Hudkins K.L."/>
            <person name="Dunn R."/>
            <person name="Kehry M.R."/>
            <person name="Migone T.S."/>
            <person name="Marshak-Rothstein A."/>
            <person name="Simon M."/>
            <person name="Randall T.D."/>
            <person name="Alpers C.E."/>
            <person name="Liggitt D."/>
            <person name="Rawlings D.J."/>
            <person name="Lund F.E."/>
        </authorList>
    </citation>
    <scope>FUNCTION</scope>
</reference>
<reference key="13">
    <citation type="journal article" date="2012" name="FEBS Lett.">
        <title>Histaminylation of glutamine residues is a novel posttranslational modification implicated in G-protein signaling.</title>
        <authorList>
            <person name="Vowinckel J."/>
            <person name="Stahlberg S."/>
            <person name="Paulmann N."/>
            <person name="Bluemlein K."/>
            <person name="Grohmann M."/>
            <person name="Ralser M."/>
            <person name="Walther D.J."/>
        </authorList>
    </citation>
    <scope>HISTAMINYLATION AT GLN-209</scope>
</reference>
<reference key="14">
    <citation type="journal article" date="2013" name="Biochim. Biophys. Acta">
        <title>A novel Galphas-binding protein, Gas-2 like 2, facilitates the signaling of the A2A adenosine receptor.</title>
        <authorList>
            <person name="Wu Y.C."/>
            <person name="Lai H.L."/>
            <person name="Chang W.C."/>
            <person name="Lin J.T."/>
            <person name="Liu Y.J."/>
            <person name="Chern Y."/>
        </authorList>
    </citation>
    <scope>INTERACTION WITH GAS2L2</scope>
</reference>
<reference evidence="16" key="15">
    <citation type="journal article" date="2010" name="Science">
        <title>Kinetic scaffolding mediated by a phospholipase C-beta and Gq signaling complex.</title>
        <authorList>
            <person name="Waldo G.L."/>
            <person name="Ricks T.K."/>
            <person name="Hicks S.N."/>
            <person name="Cheever M.L."/>
            <person name="Kawano T."/>
            <person name="Tsuboi K."/>
            <person name="Wang X."/>
            <person name="Montell C."/>
            <person name="Kozasa T."/>
            <person name="Sondek J."/>
            <person name="Harden T.K."/>
        </authorList>
    </citation>
    <scope>X-RAY CRYSTALLOGRAPHY (2.6 ANGSTROMS) OF 35-359 IN COMPLEX WITH GDP; MAGNESIUM AND PLCB3</scope>
    <scope>FUNCTION</scope>
    <scope>CATALYTIC ACTIVITY</scope>
    <scope>MUTAGENESIS OF HIS-218</scope>
</reference>
<name>GNAQ_MOUSE</name>
<accession>P21279</accession>
<accession>Q6PFF5</accession>
<dbReference type="EC" id="3.6.5.-" evidence="7"/>
<dbReference type="EMBL" id="M55412">
    <property type="protein sequence ID" value="AAA63306.1"/>
    <property type="molecule type" value="mRNA"/>
</dbReference>
<dbReference type="EMBL" id="BC057583">
    <property type="protein sequence ID" value="AAH57583.1"/>
    <property type="molecule type" value="mRNA"/>
</dbReference>
<dbReference type="CCDS" id="CCDS29684.1"/>
<dbReference type="PIR" id="A38414">
    <property type="entry name" value="RGMSQ"/>
</dbReference>
<dbReference type="RefSeq" id="NP_032165.3">
    <property type="nucleotide sequence ID" value="NM_008139.5"/>
</dbReference>
<dbReference type="PDB" id="2BCJ">
    <property type="method" value="X-ray"/>
    <property type="resolution" value="3.06 A"/>
    <property type="chains" value="Q=37-359"/>
</dbReference>
<dbReference type="PDB" id="2RGN">
    <property type="method" value="X-ray"/>
    <property type="resolution" value="3.50 A"/>
    <property type="chains" value="A/D=37-359"/>
</dbReference>
<dbReference type="PDB" id="3AH8">
    <property type="method" value="X-ray"/>
    <property type="resolution" value="2.90 A"/>
    <property type="chains" value="A=37-359"/>
</dbReference>
<dbReference type="PDB" id="4EKC">
    <property type="method" value="X-ray"/>
    <property type="resolution" value="7.40 A"/>
    <property type="chains" value="A/C=18-359"/>
</dbReference>
<dbReference type="PDB" id="4EKD">
    <property type="method" value="X-ray"/>
    <property type="resolution" value="2.71 A"/>
    <property type="chains" value="A=18-359"/>
</dbReference>
<dbReference type="PDB" id="4GNK">
    <property type="method" value="X-ray"/>
    <property type="resolution" value="4.00 A"/>
    <property type="chains" value="A/C=7-359"/>
</dbReference>
<dbReference type="PDB" id="4QJ3">
    <property type="method" value="X-ray"/>
    <property type="resolution" value="3.00 A"/>
    <property type="chains" value="A=7-359"/>
</dbReference>
<dbReference type="PDB" id="4QJ4">
    <property type="method" value="X-ray"/>
    <property type="resolution" value="3.30 A"/>
    <property type="chains" value="A=7-359"/>
</dbReference>
<dbReference type="PDB" id="4QJ5">
    <property type="method" value="X-ray"/>
    <property type="resolution" value="3.41 A"/>
    <property type="chains" value="A=7-359"/>
</dbReference>
<dbReference type="PDB" id="5DO9">
    <property type="method" value="X-ray"/>
    <property type="resolution" value="2.60 A"/>
    <property type="chains" value="A/C/E=37-350"/>
</dbReference>
<dbReference type="PDB" id="7SQ2">
    <property type="method" value="X-ray"/>
    <property type="resolution" value="2.60 A"/>
    <property type="chains" value="A=35-359"/>
</dbReference>
<dbReference type="PDBsum" id="2BCJ"/>
<dbReference type="PDBsum" id="2RGN"/>
<dbReference type="PDBsum" id="3AH8"/>
<dbReference type="PDBsum" id="4EKC"/>
<dbReference type="PDBsum" id="4EKD"/>
<dbReference type="PDBsum" id="4GNK"/>
<dbReference type="PDBsum" id="4QJ3"/>
<dbReference type="PDBsum" id="4QJ4"/>
<dbReference type="PDBsum" id="4QJ5"/>
<dbReference type="PDBsum" id="5DO9"/>
<dbReference type="PDBsum" id="7SQ2"/>
<dbReference type="SMR" id="P21279"/>
<dbReference type="BioGRID" id="199971">
    <property type="interactions" value="23"/>
</dbReference>
<dbReference type="CORUM" id="P21279"/>
<dbReference type="DIP" id="DIP-606N"/>
<dbReference type="FunCoup" id="P21279">
    <property type="interactions" value="2498"/>
</dbReference>
<dbReference type="IntAct" id="P21279">
    <property type="interactions" value="14"/>
</dbReference>
<dbReference type="MINT" id="P21279"/>
<dbReference type="STRING" id="10090.ENSMUSP00000025541"/>
<dbReference type="GlyGen" id="P21279">
    <property type="glycosylation" value="1 site, 1 O-linked glycan (1 site)"/>
</dbReference>
<dbReference type="iPTMnet" id="P21279"/>
<dbReference type="PhosphoSitePlus" id="P21279"/>
<dbReference type="SwissPalm" id="P21279"/>
<dbReference type="jPOST" id="P21279"/>
<dbReference type="PaxDb" id="10090-ENSMUSP00000025541"/>
<dbReference type="PeptideAtlas" id="P21279"/>
<dbReference type="ProteomicsDB" id="271023"/>
<dbReference type="Pumba" id="P21279"/>
<dbReference type="DNASU" id="14682"/>
<dbReference type="Ensembl" id="ENSMUST00000025541.6">
    <property type="protein sequence ID" value="ENSMUSP00000025541.6"/>
    <property type="gene ID" value="ENSMUSG00000024639.6"/>
</dbReference>
<dbReference type="GeneID" id="14682"/>
<dbReference type="KEGG" id="mmu:14682"/>
<dbReference type="UCSC" id="uc008gwt.1">
    <property type="organism name" value="mouse"/>
</dbReference>
<dbReference type="AGR" id="MGI:95776"/>
<dbReference type="CTD" id="2776"/>
<dbReference type="MGI" id="MGI:95776">
    <property type="gene designation" value="Gnaq"/>
</dbReference>
<dbReference type="VEuPathDB" id="HostDB:ENSMUSG00000024639"/>
<dbReference type="eggNOG" id="KOG0085">
    <property type="taxonomic scope" value="Eukaryota"/>
</dbReference>
<dbReference type="GeneTree" id="ENSGT00940000162569"/>
<dbReference type="HOGENOM" id="CLU_014184_6_0_1"/>
<dbReference type="InParanoid" id="P21279"/>
<dbReference type="OMA" id="FMAIQAM"/>
<dbReference type="OrthoDB" id="5817230at2759"/>
<dbReference type="PhylomeDB" id="P21279"/>
<dbReference type="TreeFam" id="TF300673"/>
<dbReference type="Reactome" id="R-MMU-112043">
    <property type="pathway name" value="PLC beta mediated events"/>
</dbReference>
<dbReference type="Reactome" id="R-MMU-202040">
    <property type="pathway name" value="G-protein activation"/>
</dbReference>
<dbReference type="Reactome" id="R-MMU-399997">
    <property type="pathway name" value="Acetylcholine regulates insulin secretion"/>
</dbReference>
<dbReference type="Reactome" id="R-MMU-416476">
    <property type="pathway name" value="G alpha (q) signalling events"/>
</dbReference>
<dbReference type="Reactome" id="R-MMU-418592">
    <property type="pathway name" value="ADP signalling through P2Y purinoceptor 1"/>
</dbReference>
<dbReference type="Reactome" id="R-MMU-428930">
    <property type="pathway name" value="Thromboxane signalling through TP receptor"/>
</dbReference>
<dbReference type="Reactome" id="R-MMU-434316">
    <property type="pathway name" value="Fatty Acids bound to GPR40 (FFAR1) regulate insulin secretion"/>
</dbReference>
<dbReference type="Reactome" id="R-MMU-456926">
    <property type="pathway name" value="Thrombin signalling through proteinase activated receptors (PARs)"/>
</dbReference>
<dbReference type="Reactome" id="R-MMU-6814122">
    <property type="pathway name" value="Cooperation of PDCL (PhLP1) and TRiC/CCT in G-protein beta folding"/>
</dbReference>
<dbReference type="Reactome" id="R-MMU-9856530">
    <property type="pathway name" value="High laminar flow shear stress activates signaling by PIEZO1 and PECAM1:CDH5:KDR in endothelial cells"/>
</dbReference>
<dbReference type="Reactome" id="R-MMU-9860927">
    <property type="pathway name" value="Turbulent (oscillatory, disturbed) flow shear stress activates signaling by PIEZO1 and integrins in endothelial cells"/>
</dbReference>
<dbReference type="BioGRID-ORCS" id="14682">
    <property type="hits" value="1 hit in 81 CRISPR screens"/>
</dbReference>
<dbReference type="CD-CODE" id="CE726F99">
    <property type="entry name" value="Postsynaptic density"/>
</dbReference>
<dbReference type="ChiTaRS" id="Gnaq">
    <property type="organism name" value="mouse"/>
</dbReference>
<dbReference type="EvolutionaryTrace" id="P21279"/>
<dbReference type="PRO" id="PR:P21279"/>
<dbReference type="Proteomes" id="UP000000589">
    <property type="component" value="Chromosome 19"/>
</dbReference>
<dbReference type="RNAct" id="P21279">
    <property type="molecule type" value="protein"/>
</dbReference>
<dbReference type="Bgee" id="ENSMUSG00000024639">
    <property type="expression patterns" value="Expressed in ventromedial nucleus of hypothalamus and 227 other cell types or tissues"/>
</dbReference>
<dbReference type="ExpressionAtlas" id="P21279">
    <property type="expression patterns" value="baseline and differential"/>
</dbReference>
<dbReference type="GO" id="GO:0044297">
    <property type="term" value="C:cell body"/>
    <property type="evidence" value="ECO:0000314"/>
    <property type="project" value="MGI"/>
</dbReference>
<dbReference type="GO" id="GO:0030425">
    <property type="term" value="C:dendrite"/>
    <property type="evidence" value="ECO:0000314"/>
    <property type="project" value="MGI"/>
</dbReference>
<dbReference type="GO" id="GO:0005794">
    <property type="term" value="C:Golgi apparatus"/>
    <property type="evidence" value="ECO:0007669"/>
    <property type="project" value="UniProtKB-SubCell"/>
</dbReference>
<dbReference type="GO" id="GO:0005834">
    <property type="term" value="C:heterotrimeric G-protein complex"/>
    <property type="evidence" value="ECO:0000266"/>
    <property type="project" value="MGI"/>
</dbReference>
<dbReference type="GO" id="GO:0016020">
    <property type="term" value="C:membrane"/>
    <property type="evidence" value="ECO:0000314"/>
    <property type="project" value="MGI"/>
</dbReference>
<dbReference type="GO" id="GO:0031965">
    <property type="term" value="C:nuclear membrane"/>
    <property type="evidence" value="ECO:0007669"/>
    <property type="project" value="UniProtKB-SubCell"/>
</dbReference>
<dbReference type="GO" id="GO:0005886">
    <property type="term" value="C:plasma membrane"/>
    <property type="evidence" value="ECO:0000314"/>
    <property type="project" value="MGI"/>
</dbReference>
<dbReference type="GO" id="GO:0099524">
    <property type="term" value="C:postsynaptic cytosol"/>
    <property type="evidence" value="ECO:0000314"/>
    <property type="project" value="UniProt"/>
</dbReference>
<dbReference type="GO" id="GO:0047391">
    <property type="term" value="F:alkylglycerophosphoethanolamine phosphodiesterase activity"/>
    <property type="evidence" value="ECO:0000266"/>
    <property type="project" value="MGI"/>
</dbReference>
<dbReference type="GO" id="GO:0030234">
    <property type="term" value="F:enzyme regulator activity"/>
    <property type="evidence" value="ECO:0000314"/>
    <property type="project" value="UniProt"/>
</dbReference>
<dbReference type="GO" id="GO:0003925">
    <property type="term" value="F:G protein activity"/>
    <property type="evidence" value="ECO:0000314"/>
    <property type="project" value="UniProtKB"/>
</dbReference>
<dbReference type="GO" id="GO:0001664">
    <property type="term" value="F:G protein-coupled receptor binding"/>
    <property type="evidence" value="ECO:0007669"/>
    <property type="project" value="InterPro"/>
</dbReference>
<dbReference type="GO" id="GO:0031683">
    <property type="term" value="F:G-protein beta/gamma-subunit complex binding"/>
    <property type="evidence" value="ECO:0007669"/>
    <property type="project" value="InterPro"/>
</dbReference>
<dbReference type="GO" id="GO:0005525">
    <property type="term" value="F:GTP binding"/>
    <property type="evidence" value="ECO:0007669"/>
    <property type="project" value="UniProtKB-KW"/>
</dbReference>
<dbReference type="GO" id="GO:0003924">
    <property type="term" value="F:GTPase activity"/>
    <property type="evidence" value="ECO:0000304"/>
    <property type="project" value="MGI"/>
</dbReference>
<dbReference type="GO" id="GO:0046872">
    <property type="term" value="F:metal ion binding"/>
    <property type="evidence" value="ECO:0007669"/>
    <property type="project" value="UniProtKB-KW"/>
</dbReference>
<dbReference type="GO" id="GO:0001508">
    <property type="term" value="P:action potential"/>
    <property type="evidence" value="ECO:0000315"/>
    <property type="project" value="MGI"/>
</dbReference>
<dbReference type="GO" id="GO:0007189">
    <property type="term" value="P:adenylate cyclase-activating G protein-coupled receptor signaling pathway"/>
    <property type="evidence" value="ECO:0000314"/>
    <property type="project" value="MGI"/>
</dbReference>
<dbReference type="GO" id="GO:1904888">
    <property type="term" value="P:cranial skeletal system development"/>
    <property type="evidence" value="ECO:0000316"/>
    <property type="project" value="MGI"/>
</dbReference>
<dbReference type="GO" id="GO:0048066">
    <property type="term" value="P:developmental pigmentation"/>
    <property type="evidence" value="ECO:0000315"/>
    <property type="project" value="MGI"/>
</dbReference>
<dbReference type="GO" id="GO:0042733">
    <property type="term" value="P:embryonic digit morphogenesis"/>
    <property type="evidence" value="ECO:0000316"/>
    <property type="project" value="MGI"/>
</dbReference>
<dbReference type="GO" id="GO:0086100">
    <property type="term" value="P:endothelin receptor signaling pathway"/>
    <property type="evidence" value="ECO:0000316"/>
    <property type="project" value="MGI"/>
</dbReference>
<dbReference type="GO" id="GO:0021884">
    <property type="term" value="P:forebrain neuron development"/>
    <property type="evidence" value="ECO:0000315"/>
    <property type="project" value="MGI"/>
</dbReference>
<dbReference type="GO" id="GO:0007186">
    <property type="term" value="P:G protein-coupled receptor signaling pathway"/>
    <property type="evidence" value="ECO:0000315"/>
    <property type="project" value="MGI"/>
</dbReference>
<dbReference type="GO" id="GO:0007215">
    <property type="term" value="P:glutamate receptor signaling pathway"/>
    <property type="evidence" value="ECO:0000315"/>
    <property type="project" value="MGI"/>
</dbReference>
<dbReference type="GO" id="GO:0007507">
    <property type="term" value="P:heart development"/>
    <property type="evidence" value="ECO:0000315"/>
    <property type="project" value="MGI"/>
</dbReference>
<dbReference type="GO" id="GO:1990806">
    <property type="term" value="P:ligand-gated ion channel signaling pathway"/>
    <property type="evidence" value="ECO:0000315"/>
    <property type="project" value="MGI"/>
</dbReference>
<dbReference type="GO" id="GO:0042711">
    <property type="term" value="P:maternal behavior"/>
    <property type="evidence" value="ECO:0000315"/>
    <property type="project" value="MGI"/>
</dbReference>
<dbReference type="GO" id="GO:0016322">
    <property type="term" value="P:neuron remodeling"/>
    <property type="evidence" value="ECO:0000315"/>
    <property type="project" value="MGI"/>
</dbReference>
<dbReference type="GO" id="GO:0060158">
    <property type="term" value="P:phospholipase C-activating dopamine receptor signaling pathway"/>
    <property type="evidence" value="ECO:0000316"/>
    <property type="project" value="MGI"/>
</dbReference>
<dbReference type="GO" id="GO:0007207">
    <property type="term" value="P:phospholipase C-activating G protein-coupled acetylcholine receptor signaling pathway"/>
    <property type="evidence" value="ECO:0000316"/>
    <property type="project" value="MGI"/>
</dbReference>
<dbReference type="GO" id="GO:0007200">
    <property type="term" value="P:phospholipase C-activating G protein-coupled receptor signaling pathway"/>
    <property type="evidence" value="ECO:0000314"/>
    <property type="project" value="UniProtKB"/>
</dbReference>
<dbReference type="GO" id="GO:0032024">
    <property type="term" value="P:positive regulation of insulin secretion"/>
    <property type="evidence" value="ECO:0000315"/>
    <property type="project" value="MGI"/>
</dbReference>
<dbReference type="GO" id="GO:0009791">
    <property type="term" value="P:post-embryonic development"/>
    <property type="evidence" value="ECO:0000315"/>
    <property type="project" value="MGI"/>
</dbReference>
<dbReference type="GO" id="GO:0008217">
    <property type="term" value="P:regulation of blood pressure"/>
    <property type="evidence" value="ECO:0000316"/>
    <property type="project" value="MGI"/>
</dbReference>
<dbReference type="GO" id="GO:0045634">
    <property type="term" value="P:regulation of melanocyte differentiation"/>
    <property type="evidence" value="ECO:0000315"/>
    <property type="project" value="MGI"/>
</dbReference>
<dbReference type="GO" id="GO:0010543">
    <property type="term" value="P:regulation of platelet activation"/>
    <property type="evidence" value="ECO:0000315"/>
    <property type="project" value="UniProtKB"/>
</dbReference>
<dbReference type="GO" id="GO:0001501">
    <property type="term" value="P:skeletal system development"/>
    <property type="evidence" value="ECO:0000315"/>
    <property type="project" value="MGI"/>
</dbReference>
<dbReference type="CDD" id="cd00066">
    <property type="entry name" value="G-alpha"/>
    <property type="match status" value="1"/>
</dbReference>
<dbReference type="FunFam" id="3.40.50.300:FF:003977">
    <property type="entry name" value="Guanine nucleotide-binding protein G(q) subunit alpha"/>
    <property type="match status" value="1"/>
</dbReference>
<dbReference type="FunFam" id="1.10.400.10:FF:000002">
    <property type="entry name" value="guanine nucleotide-binding protein G(Q) subunit alpha"/>
    <property type="match status" value="1"/>
</dbReference>
<dbReference type="FunFam" id="3.40.50.300:FF:000692">
    <property type="entry name" value="Guanine nucleotide-binding protein subunit alpha"/>
    <property type="match status" value="1"/>
</dbReference>
<dbReference type="Gene3D" id="1.10.400.10">
    <property type="entry name" value="GI Alpha 1, domain 2-like"/>
    <property type="match status" value="1"/>
</dbReference>
<dbReference type="Gene3D" id="3.40.50.300">
    <property type="entry name" value="P-loop containing nucleotide triphosphate hydrolases"/>
    <property type="match status" value="1"/>
</dbReference>
<dbReference type="InterPro" id="IPR000654">
    <property type="entry name" value="Gprotein_alpha_Q"/>
</dbReference>
<dbReference type="InterPro" id="IPR001019">
    <property type="entry name" value="Gprotein_alpha_su"/>
</dbReference>
<dbReference type="InterPro" id="IPR011025">
    <property type="entry name" value="GproteinA_insert"/>
</dbReference>
<dbReference type="InterPro" id="IPR027417">
    <property type="entry name" value="P-loop_NTPase"/>
</dbReference>
<dbReference type="PANTHER" id="PTHR10218">
    <property type="entry name" value="GTP-BINDING PROTEIN ALPHA SUBUNIT"/>
    <property type="match status" value="1"/>
</dbReference>
<dbReference type="PANTHER" id="PTHR10218:SF329">
    <property type="entry name" value="GUANINE NUCLEOTIDE-BINDING PROTEIN G(Q) SUBUNIT ALPHA"/>
    <property type="match status" value="1"/>
</dbReference>
<dbReference type="Pfam" id="PF00503">
    <property type="entry name" value="G-alpha"/>
    <property type="match status" value="1"/>
</dbReference>
<dbReference type="PRINTS" id="PR00318">
    <property type="entry name" value="GPROTEINA"/>
</dbReference>
<dbReference type="PRINTS" id="PR00442">
    <property type="entry name" value="GPROTEINAQ"/>
</dbReference>
<dbReference type="SMART" id="SM00275">
    <property type="entry name" value="G_alpha"/>
    <property type="match status" value="1"/>
</dbReference>
<dbReference type="SUPFAM" id="SSF52540">
    <property type="entry name" value="P-loop containing nucleoside triphosphate hydrolases"/>
    <property type="match status" value="1"/>
</dbReference>
<dbReference type="SUPFAM" id="SSF47895">
    <property type="entry name" value="Transducin (alpha subunit), insertion domain"/>
    <property type="match status" value="1"/>
</dbReference>
<dbReference type="PROSITE" id="PS51882">
    <property type="entry name" value="G_ALPHA"/>
    <property type="match status" value="1"/>
</dbReference>
<feature type="chain" id="PRO_0000203761" description="Guanine nucleotide-binding protein G(q) subunit alpha">
    <location>
        <begin position="1"/>
        <end position="359"/>
    </location>
</feature>
<feature type="domain" description="G-alpha" evidence="2">
    <location>
        <begin position="38"/>
        <end position="359"/>
    </location>
</feature>
<feature type="region of interest" description="G1 motif" evidence="2">
    <location>
        <begin position="41"/>
        <end position="54"/>
    </location>
</feature>
<feature type="region of interest" description="G2 motif" evidence="2">
    <location>
        <begin position="178"/>
        <end position="186"/>
    </location>
</feature>
<feature type="region of interest" description="G3 motif" evidence="2">
    <location>
        <begin position="201"/>
        <end position="210"/>
    </location>
</feature>
<feature type="region of interest" description="G4 motif" evidence="2">
    <location>
        <begin position="270"/>
        <end position="277"/>
    </location>
</feature>
<feature type="region of interest" description="G5 motif" evidence="2">
    <location>
        <begin position="329"/>
        <end position="334"/>
    </location>
</feature>
<feature type="binding site" evidence="15 16">
    <location>
        <position position="50"/>
    </location>
    <ligand>
        <name>GTP</name>
        <dbReference type="ChEBI" id="CHEBI:37565"/>
    </ligand>
</feature>
<feature type="binding site" evidence="15 16">
    <location>
        <position position="51"/>
    </location>
    <ligand>
        <name>GTP</name>
        <dbReference type="ChEBI" id="CHEBI:37565"/>
    </ligand>
</feature>
<feature type="binding site" evidence="15 16">
    <location>
        <position position="52"/>
    </location>
    <ligand>
        <name>GTP</name>
        <dbReference type="ChEBI" id="CHEBI:37565"/>
    </ligand>
</feature>
<feature type="binding site" evidence="15 16">
    <location>
        <position position="53"/>
    </location>
    <ligand>
        <name>GTP</name>
        <dbReference type="ChEBI" id="CHEBI:37565"/>
    </ligand>
</feature>
<feature type="binding site" evidence="7 16">
    <location>
        <position position="53"/>
    </location>
    <ligand>
        <name>Mg(2+)</name>
        <dbReference type="ChEBI" id="CHEBI:18420"/>
    </ligand>
</feature>
<feature type="binding site" evidence="15 16">
    <location>
        <position position="54"/>
    </location>
    <ligand>
        <name>GTP</name>
        <dbReference type="ChEBI" id="CHEBI:37565"/>
    </ligand>
</feature>
<feature type="binding site" evidence="15 16">
    <location>
        <position position="156"/>
    </location>
    <ligand>
        <name>GTP</name>
        <dbReference type="ChEBI" id="CHEBI:37565"/>
    </ligand>
</feature>
<feature type="binding site" evidence="15 16">
    <location>
        <position position="180"/>
    </location>
    <ligand>
        <name>GTP</name>
        <dbReference type="ChEBI" id="CHEBI:37565"/>
    </ligand>
</feature>
<feature type="binding site" evidence="15 16">
    <location>
        <position position="181"/>
    </location>
    <ligand>
        <name>GTP</name>
        <dbReference type="ChEBI" id="CHEBI:37565"/>
    </ligand>
</feature>
<feature type="binding site" evidence="15 16">
    <location>
        <position position="183"/>
    </location>
    <ligand>
        <name>GTP</name>
        <dbReference type="ChEBI" id="CHEBI:37565"/>
    </ligand>
</feature>
<feature type="binding site" evidence="7 16">
    <location>
        <position position="186"/>
    </location>
    <ligand>
        <name>Mg(2+)</name>
        <dbReference type="ChEBI" id="CHEBI:18420"/>
    </ligand>
</feature>
<feature type="binding site" evidence="15 16">
    <location>
        <position position="274"/>
    </location>
    <ligand>
        <name>GTP</name>
        <dbReference type="ChEBI" id="CHEBI:37565"/>
    </ligand>
</feature>
<feature type="binding site" evidence="15 16">
    <location>
        <position position="275"/>
    </location>
    <ligand>
        <name>GTP</name>
        <dbReference type="ChEBI" id="CHEBI:37565"/>
    </ligand>
</feature>
<feature type="binding site" evidence="15 16">
    <location>
        <position position="277"/>
    </location>
    <ligand>
        <name>GTP</name>
        <dbReference type="ChEBI" id="CHEBI:37565"/>
    </ligand>
</feature>
<feature type="binding site" evidence="15 16">
    <location>
        <position position="331"/>
    </location>
    <ligand>
        <name>GTP</name>
        <dbReference type="ChEBI" id="CHEBI:37565"/>
    </ligand>
</feature>
<feature type="modified residue" description="5-glutamyl histamine" evidence="8">
    <location>
        <position position="209"/>
    </location>
</feature>
<feature type="lipid moiety-binding region" description="S-palmitoyl cysteine" evidence="10">
    <location>
        <position position="9"/>
    </location>
</feature>
<feature type="lipid moiety-binding region" description="S-palmitoyl cysteine" evidence="10">
    <location>
        <position position="10"/>
    </location>
</feature>
<feature type="mutagenesis site" description="Abolishes palmitoylation." evidence="10">
    <original>C</original>
    <variation>S</variation>
    <location>
        <position position="9"/>
    </location>
</feature>
<feature type="mutagenesis site" description="Abolishes palmitoylation." evidence="10">
    <original>C</original>
    <variation>S</variation>
    <location>
        <position position="10"/>
    </location>
</feature>
<feature type="mutagenesis site" description="Reduced ability to activate phospholipase PLCB3." evidence="7">
    <original>H</original>
    <variation>A</variation>
    <location>
        <position position="218"/>
    </location>
</feature>
<feature type="sequence conflict" description="In Ref. 1; AAA63306." evidence="14" ref="1">
    <original>QL</original>
    <variation>HV</variation>
    <location>
        <begin position="28"/>
        <end position="29"/>
    </location>
</feature>
<feature type="sequence conflict" description="In Ref. 2; AAH57583." evidence="14" ref="2">
    <location>
        <position position="62"/>
    </location>
</feature>
<feature type="strand" evidence="18">
    <location>
        <begin position="39"/>
        <end position="45"/>
    </location>
</feature>
<feature type="strand" evidence="17">
    <location>
        <begin position="47"/>
        <end position="51"/>
    </location>
</feature>
<feature type="helix" evidence="18">
    <location>
        <begin position="52"/>
        <end position="63"/>
    </location>
</feature>
<feature type="helix" evidence="18">
    <location>
        <begin position="69"/>
        <end position="73"/>
    </location>
</feature>
<feature type="helix" evidence="18">
    <location>
        <begin position="76"/>
        <end position="96"/>
    </location>
</feature>
<feature type="helix" evidence="18">
    <location>
        <begin position="105"/>
        <end position="114"/>
    </location>
</feature>
<feature type="helix" evidence="18">
    <location>
        <begin position="118"/>
        <end position="120"/>
    </location>
</feature>
<feature type="helix" evidence="18">
    <location>
        <begin position="128"/>
        <end position="136"/>
    </location>
</feature>
<feature type="helix" evidence="18">
    <location>
        <begin position="139"/>
        <end position="146"/>
    </location>
</feature>
<feature type="helix" evidence="18">
    <location>
        <begin position="147"/>
        <end position="150"/>
    </location>
</feature>
<feature type="helix" evidence="18">
    <location>
        <begin position="157"/>
        <end position="161"/>
    </location>
</feature>
<feature type="helix" evidence="18">
    <location>
        <begin position="164"/>
        <end position="168"/>
    </location>
</feature>
<feature type="helix" evidence="18">
    <location>
        <begin position="176"/>
        <end position="181"/>
    </location>
</feature>
<feature type="strand" evidence="18">
    <location>
        <begin position="188"/>
        <end position="195"/>
    </location>
</feature>
<feature type="strand" evidence="18">
    <location>
        <begin position="197"/>
        <end position="206"/>
    </location>
</feature>
<feature type="helix" evidence="18">
    <location>
        <begin position="210"/>
        <end position="213"/>
    </location>
</feature>
<feature type="helix" evidence="18">
    <location>
        <begin position="214"/>
        <end position="219"/>
    </location>
</feature>
<feature type="strand" evidence="18">
    <location>
        <begin position="224"/>
        <end position="231"/>
    </location>
</feature>
<feature type="helix" evidence="18">
    <location>
        <begin position="232"/>
        <end position="236"/>
    </location>
</feature>
<feature type="strand" evidence="18">
    <location>
        <begin position="240"/>
        <end position="244"/>
    </location>
</feature>
<feature type="helix" evidence="18">
    <location>
        <begin position="247"/>
        <end position="260"/>
    </location>
</feature>
<feature type="helix" evidence="18">
    <location>
        <begin position="262"/>
        <end position="264"/>
    </location>
</feature>
<feature type="strand" evidence="18">
    <location>
        <begin position="267"/>
        <end position="274"/>
    </location>
</feature>
<feature type="helix" evidence="18">
    <location>
        <begin position="276"/>
        <end position="282"/>
    </location>
</feature>
<feature type="turn" evidence="18">
    <location>
        <begin position="283"/>
        <end position="285"/>
    </location>
</feature>
<feature type="helix" evidence="18">
    <location>
        <begin position="288"/>
        <end position="290"/>
    </location>
</feature>
<feature type="helix" evidence="18">
    <location>
        <begin position="302"/>
        <end position="314"/>
    </location>
</feature>
<feature type="strand" evidence="18">
    <location>
        <begin position="324"/>
        <end position="328"/>
    </location>
</feature>
<feature type="helix" evidence="18">
    <location>
        <begin position="334"/>
        <end position="346"/>
    </location>
</feature>
<feature type="turn" evidence="18">
    <location>
        <begin position="347"/>
        <end position="349"/>
    </location>
</feature>
<evidence type="ECO:0000250" key="1">
    <source>
        <dbReference type="UniProtKB" id="P50148"/>
    </source>
</evidence>
<evidence type="ECO:0000255" key="2">
    <source>
        <dbReference type="PROSITE-ProRule" id="PRU01230"/>
    </source>
</evidence>
<evidence type="ECO:0000269" key="3">
    <source>
    </source>
</evidence>
<evidence type="ECO:0000269" key="4">
    <source>
    </source>
</evidence>
<evidence type="ECO:0000269" key="5">
    <source>
    </source>
</evidence>
<evidence type="ECO:0000269" key="6">
    <source>
    </source>
</evidence>
<evidence type="ECO:0000269" key="7">
    <source>
    </source>
</evidence>
<evidence type="ECO:0000269" key="8">
    <source>
    </source>
</evidence>
<evidence type="ECO:0000269" key="9">
    <source>
    </source>
</evidence>
<evidence type="ECO:0000269" key="10">
    <source>
    </source>
</evidence>
<evidence type="ECO:0000269" key="11">
    <source>
    </source>
</evidence>
<evidence type="ECO:0000269" key="12">
    <source>
    </source>
</evidence>
<evidence type="ECO:0000269" key="13">
    <source>
    </source>
</evidence>
<evidence type="ECO:0000305" key="14"/>
<evidence type="ECO:0000305" key="15">
    <source>
    </source>
</evidence>
<evidence type="ECO:0007744" key="16">
    <source>
        <dbReference type="PDB" id="7SQ2"/>
    </source>
</evidence>
<evidence type="ECO:0007829" key="17">
    <source>
        <dbReference type="PDB" id="4QJ4"/>
    </source>
</evidence>
<evidence type="ECO:0007829" key="18">
    <source>
        <dbReference type="PDB" id="5DO9"/>
    </source>
</evidence>
<organism>
    <name type="scientific">Mus musculus</name>
    <name type="common">Mouse</name>
    <dbReference type="NCBI Taxonomy" id="10090"/>
    <lineage>
        <taxon>Eukaryota</taxon>
        <taxon>Metazoa</taxon>
        <taxon>Chordata</taxon>
        <taxon>Craniata</taxon>
        <taxon>Vertebrata</taxon>
        <taxon>Euteleostomi</taxon>
        <taxon>Mammalia</taxon>
        <taxon>Eutheria</taxon>
        <taxon>Euarchontoglires</taxon>
        <taxon>Glires</taxon>
        <taxon>Rodentia</taxon>
        <taxon>Myomorpha</taxon>
        <taxon>Muroidea</taxon>
        <taxon>Muridae</taxon>
        <taxon>Murinae</taxon>
        <taxon>Mus</taxon>
        <taxon>Mus</taxon>
    </lineage>
</organism>
<gene>
    <name type="primary">Gnaq</name>
</gene>
<protein>
    <recommendedName>
        <fullName>Guanine nucleotide-binding protein G(q) subunit alpha</fullName>
        <ecNumber evidence="7">3.6.5.-</ecNumber>
    </recommendedName>
    <alternativeName>
        <fullName>Guanine nucleotide-binding protein alpha-q</fullName>
    </alternativeName>
</protein>
<sequence length="359" mass="42158">MTLESIMACCLSEEAKEARRINDEIERQLRRDKRDARRELKLLLLGTGESGKSTFIKQMRIIHGSGYSDEDKRGFTKLVYQNIFTAMQAMIRAMDTLKIPYKYEHNKAHAQLVREVDVEKVSAFENPYVDAIKSLWNDPGIQECYDRRREYQLSDSTKYYLNDLDRVADPSYLPTQQDVLRVRVPTTGIIEYPFDLQSVIFRMVDVGGQRSERRKWIHCFENVTSIMFLVALSEYDQVLVESDNENRMEESKALFRTIITYPWFQNSSVILFLNKKDLLEEKIMYSHLVDYFPEYDGPQRDAQAAREFILKMFVDLNPDSDKIIYSHFTCATDTENIRFVFAAVKDTILQLNLKEYNLV</sequence>
<proteinExistence type="evidence at protein level"/>